<feature type="chain" id="PRO_0000257618" description="Putative pre-16S rRNA nuclease">
    <location>
        <begin position="1"/>
        <end position="155"/>
    </location>
</feature>
<name>YQGF_XANOM</name>
<evidence type="ECO:0000255" key="1">
    <source>
        <dbReference type="HAMAP-Rule" id="MF_00651"/>
    </source>
</evidence>
<comment type="function">
    <text evidence="1">Could be a nuclease involved in processing of the 5'-end of pre-16S rRNA.</text>
</comment>
<comment type="subcellular location">
    <subcellularLocation>
        <location evidence="1">Cytoplasm</location>
    </subcellularLocation>
</comment>
<comment type="similarity">
    <text evidence="1">Belongs to the YqgF nuclease family.</text>
</comment>
<reference key="1">
    <citation type="journal article" date="2005" name="Jpn. Agric. Res. Q.">
        <title>Genome sequence of Xanthomonas oryzae pv. oryzae suggests contribution of large numbers of effector genes and insertion sequences to its race diversity.</title>
        <authorList>
            <person name="Ochiai H."/>
            <person name="Inoue Y."/>
            <person name="Takeya M."/>
            <person name="Sasaki A."/>
            <person name="Kaku H."/>
        </authorList>
    </citation>
    <scope>NUCLEOTIDE SEQUENCE [LARGE SCALE GENOMIC DNA]</scope>
    <source>
        <strain>MAFF 311018</strain>
    </source>
</reference>
<gene>
    <name type="ordered locus">XOO1310</name>
</gene>
<dbReference type="EC" id="3.1.-.-" evidence="1"/>
<dbReference type="EMBL" id="AP008229">
    <property type="protein sequence ID" value="BAE68065.1"/>
    <property type="molecule type" value="Genomic_DNA"/>
</dbReference>
<dbReference type="SMR" id="Q2P5W2"/>
<dbReference type="KEGG" id="xom:XOO1310"/>
<dbReference type="HOGENOM" id="CLU_098240_3_2_6"/>
<dbReference type="GO" id="GO:0005829">
    <property type="term" value="C:cytosol"/>
    <property type="evidence" value="ECO:0007669"/>
    <property type="project" value="TreeGrafter"/>
</dbReference>
<dbReference type="GO" id="GO:0004518">
    <property type="term" value="F:nuclease activity"/>
    <property type="evidence" value="ECO:0007669"/>
    <property type="project" value="UniProtKB-KW"/>
</dbReference>
<dbReference type="GO" id="GO:0000967">
    <property type="term" value="P:rRNA 5'-end processing"/>
    <property type="evidence" value="ECO:0007669"/>
    <property type="project" value="UniProtKB-UniRule"/>
</dbReference>
<dbReference type="CDD" id="cd16964">
    <property type="entry name" value="YqgF"/>
    <property type="match status" value="1"/>
</dbReference>
<dbReference type="FunFam" id="3.30.420.140:FF:000010">
    <property type="entry name" value="Putative pre-16S rRNA nuclease"/>
    <property type="match status" value="1"/>
</dbReference>
<dbReference type="Gene3D" id="3.30.420.140">
    <property type="entry name" value="YqgF/RNase H-like domain"/>
    <property type="match status" value="1"/>
</dbReference>
<dbReference type="HAMAP" id="MF_00651">
    <property type="entry name" value="Nuclease_YqgF"/>
    <property type="match status" value="1"/>
</dbReference>
<dbReference type="InterPro" id="IPR012337">
    <property type="entry name" value="RNaseH-like_sf"/>
</dbReference>
<dbReference type="InterPro" id="IPR005227">
    <property type="entry name" value="YqgF"/>
</dbReference>
<dbReference type="InterPro" id="IPR006641">
    <property type="entry name" value="YqgF/RNaseH-like_dom"/>
</dbReference>
<dbReference type="InterPro" id="IPR037027">
    <property type="entry name" value="YqgF/RNaseH-like_dom_sf"/>
</dbReference>
<dbReference type="NCBIfam" id="TIGR00250">
    <property type="entry name" value="RNAse_H_YqgF"/>
    <property type="match status" value="1"/>
</dbReference>
<dbReference type="PANTHER" id="PTHR33317">
    <property type="entry name" value="POLYNUCLEOTIDYL TRANSFERASE, RIBONUCLEASE H-LIKE SUPERFAMILY PROTEIN"/>
    <property type="match status" value="1"/>
</dbReference>
<dbReference type="PANTHER" id="PTHR33317:SF4">
    <property type="entry name" value="POLYNUCLEOTIDYL TRANSFERASE, RIBONUCLEASE H-LIKE SUPERFAMILY PROTEIN"/>
    <property type="match status" value="1"/>
</dbReference>
<dbReference type="Pfam" id="PF03652">
    <property type="entry name" value="RuvX"/>
    <property type="match status" value="1"/>
</dbReference>
<dbReference type="SMART" id="SM00732">
    <property type="entry name" value="YqgFc"/>
    <property type="match status" value="1"/>
</dbReference>
<dbReference type="SUPFAM" id="SSF53098">
    <property type="entry name" value="Ribonuclease H-like"/>
    <property type="match status" value="1"/>
</dbReference>
<proteinExistence type="inferred from homology"/>
<organism>
    <name type="scientific">Xanthomonas oryzae pv. oryzae (strain MAFF 311018)</name>
    <dbReference type="NCBI Taxonomy" id="342109"/>
    <lineage>
        <taxon>Bacteria</taxon>
        <taxon>Pseudomonadati</taxon>
        <taxon>Pseudomonadota</taxon>
        <taxon>Gammaproteobacteria</taxon>
        <taxon>Lysobacterales</taxon>
        <taxon>Lysobacteraceae</taxon>
        <taxon>Xanthomonas</taxon>
    </lineage>
</organism>
<keyword id="KW-0963">Cytoplasm</keyword>
<keyword id="KW-0378">Hydrolase</keyword>
<keyword id="KW-0540">Nuclease</keyword>
<keyword id="KW-0690">Ribosome biogenesis</keyword>
<accession>Q2P5W2</accession>
<protein>
    <recommendedName>
        <fullName evidence="1">Putative pre-16S rRNA nuclease</fullName>
        <ecNumber evidence="1">3.1.-.-</ecNumber>
    </recommendedName>
</protein>
<sequence>MPEAGAILPDGTVLGFDVGSRRIGVAVGTALGAGARAVAVINVHASGPDWDALDRVHKEWRPDGLVVGDPLTLDDKHQPARKRAHAFARQLRERYALPVVLIDERSSSVEAAQRFARERADGRKRRRDAEALDAMAAAVIVERWLAAPDQATLLP</sequence>